<feature type="signal peptide" evidence="3">
    <location>
        <begin position="1"/>
        <end position="18"/>
    </location>
</feature>
<feature type="chain" id="PRO_0000360415" description="Lysosome-associated membrane glycoprotein 5">
    <location>
        <begin position="19"/>
        <end position="275"/>
    </location>
</feature>
<feature type="topological domain" description="Extracellular" evidence="3">
    <location>
        <begin position="19"/>
        <end position="228"/>
    </location>
</feature>
<feature type="transmembrane region" description="Helical" evidence="3">
    <location>
        <begin position="229"/>
        <end position="249"/>
    </location>
</feature>
<feature type="topological domain" description="Cytoplasmic" evidence="3">
    <location>
        <begin position="250"/>
        <end position="275"/>
    </location>
</feature>
<feature type="glycosylation site" description="N-linked (GlcNAc...) asparagine" evidence="3">
    <location>
        <position position="24"/>
    </location>
</feature>
<feature type="glycosylation site" description="N-linked (GlcNAc...) asparagine" evidence="3">
    <location>
        <position position="42"/>
    </location>
</feature>
<keyword id="KW-1003">Cell membrane</keyword>
<keyword id="KW-0966">Cell projection</keyword>
<keyword id="KW-0968">Cytoplasmic vesicle</keyword>
<keyword id="KW-0967">Endosome</keyword>
<keyword id="KW-0325">Glycoprotein</keyword>
<keyword id="KW-0472">Membrane</keyword>
<keyword id="KW-1185">Reference proteome</keyword>
<keyword id="KW-0732">Signal</keyword>
<keyword id="KW-0770">Synapse</keyword>
<keyword id="KW-0812">Transmembrane</keyword>
<keyword id="KW-1133">Transmembrane helix</keyword>
<name>LAMP5_DANRE</name>
<comment type="function">
    <text evidence="1">Plays a role in short-term synaptic plasticity in a subset of GABAergic neurons in the brain.</text>
</comment>
<comment type="subcellular location">
    <subcellularLocation>
        <location evidence="1">Cytoplasmic vesicle membrane</location>
        <topology evidence="1">Single-pass type I membrane protein</topology>
    </subcellularLocation>
    <subcellularLocation>
        <location evidence="1">Cell membrane</location>
        <topology evidence="1">Single-pass type I membrane protein</topology>
    </subcellularLocation>
    <subcellularLocation>
        <location evidence="1">Cell projection</location>
        <location evidence="1">Dendrite</location>
    </subcellularLocation>
    <subcellularLocation>
        <location evidence="1">Cytoplasmic vesicle</location>
        <location evidence="1">Secretory vesicle</location>
        <location evidence="1">Synaptic vesicle membrane</location>
        <topology evidence="1">Single-pass type I membrane protein</topology>
    </subcellularLocation>
    <subcellularLocation>
        <location evidence="1">Cell projection</location>
        <location evidence="1">Growth cone membrane</location>
        <topology evidence="1">Single-pass type I membrane protein</topology>
    </subcellularLocation>
    <subcellularLocation>
        <location evidence="1">Early endosome membrane</location>
        <topology evidence="1">Single-pass type I membrane protein</topology>
    </subcellularLocation>
    <subcellularLocation>
        <location evidence="1">Recycling endosome</location>
    </subcellularLocation>
    <subcellularLocation>
        <location evidence="2">Endoplasmic reticulum-Golgi intermediate compartment membrane</location>
        <topology evidence="1">Single-pass type I membrane protein</topology>
    </subcellularLocation>
    <subcellularLocation>
        <location evidence="2">Endosome membrane</location>
        <topology evidence="1">Single-pass type I membrane protein</topology>
    </subcellularLocation>
</comment>
<comment type="PTM">
    <text evidence="1">Glycosylated.</text>
</comment>
<comment type="similarity">
    <text evidence="4">Belongs to the LAMP family.</text>
</comment>
<protein>
    <recommendedName>
        <fullName>Lysosome-associated membrane glycoprotein 5</fullName>
    </recommendedName>
    <alternativeName>
        <fullName>Lysosome-associated membrane protein 5</fullName>
        <shortName>LAMP-5</shortName>
    </alternativeName>
</protein>
<reference key="1">
    <citation type="submission" date="2007-11" db="EMBL/GenBank/DDBJ databases">
        <authorList>
            <consortium name="NIH - Zebrafish Gene Collection (ZGC) project"/>
        </authorList>
    </citation>
    <scope>NUCLEOTIDE SEQUENCE [LARGE SCALE MRNA]</scope>
    <source>
        <tissue>Eye</tissue>
    </source>
</reference>
<organism>
    <name type="scientific">Danio rerio</name>
    <name type="common">Zebrafish</name>
    <name type="synonym">Brachydanio rerio</name>
    <dbReference type="NCBI Taxonomy" id="7955"/>
    <lineage>
        <taxon>Eukaryota</taxon>
        <taxon>Metazoa</taxon>
        <taxon>Chordata</taxon>
        <taxon>Craniata</taxon>
        <taxon>Vertebrata</taxon>
        <taxon>Euteleostomi</taxon>
        <taxon>Actinopterygii</taxon>
        <taxon>Neopterygii</taxon>
        <taxon>Teleostei</taxon>
        <taxon>Ostariophysi</taxon>
        <taxon>Cypriniformes</taxon>
        <taxon>Danionidae</taxon>
        <taxon>Danioninae</taxon>
        <taxon>Danio</taxon>
    </lineage>
</organism>
<dbReference type="EMBL" id="BC154416">
    <property type="protein sequence ID" value="AAI54417.1"/>
    <property type="molecule type" value="mRNA"/>
</dbReference>
<dbReference type="RefSeq" id="NP_001107133.1">
    <property type="nucleotide sequence ID" value="NM_001113661.1"/>
</dbReference>
<dbReference type="SMR" id="A8WFR0"/>
<dbReference type="FunCoup" id="A8WFR0">
    <property type="interactions" value="1101"/>
</dbReference>
<dbReference type="STRING" id="7955.ENSDARP00000130608"/>
<dbReference type="GlyCosmos" id="A8WFR0">
    <property type="glycosylation" value="2 sites, No reported glycans"/>
</dbReference>
<dbReference type="PeptideAtlas" id="A8WFR0"/>
<dbReference type="GeneID" id="100006791"/>
<dbReference type="KEGG" id="dre:100006791"/>
<dbReference type="AGR" id="ZFIN:ZDB-GENE-080220-19"/>
<dbReference type="ZFIN" id="ZDB-GENE-080220-19">
    <property type="gene designation" value="zgc:165600"/>
</dbReference>
<dbReference type="InParanoid" id="A8WFR0"/>
<dbReference type="OrthoDB" id="6248302at2759"/>
<dbReference type="PRO" id="PR:A8WFR0"/>
<dbReference type="Proteomes" id="UP000000437">
    <property type="component" value="Unplaced"/>
</dbReference>
<dbReference type="GO" id="GO:0030659">
    <property type="term" value="C:cytoplasmic vesicle membrane"/>
    <property type="evidence" value="ECO:0000250"/>
    <property type="project" value="UniProtKB"/>
</dbReference>
<dbReference type="GO" id="GO:0032590">
    <property type="term" value="C:dendrite membrane"/>
    <property type="evidence" value="ECO:0000250"/>
    <property type="project" value="UniProtKB"/>
</dbReference>
<dbReference type="GO" id="GO:0031901">
    <property type="term" value="C:early endosome membrane"/>
    <property type="evidence" value="ECO:0000250"/>
    <property type="project" value="UniProtKB"/>
</dbReference>
<dbReference type="GO" id="GO:0033116">
    <property type="term" value="C:endoplasmic reticulum-Golgi intermediate compartment membrane"/>
    <property type="evidence" value="ECO:0000250"/>
    <property type="project" value="UniProtKB"/>
</dbReference>
<dbReference type="GO" id="GO:0010008">
    <property type="term" value="C:endosome membrane"/>
    <property type="evidence" value="ECO:0000250"/>
    <property type="project" value="UniProtKB"/>
</dbReference>
<dbReference type="GO" id="GO:0032584">
    <property type="term" value="C:growth cone membrane"/>
    <property type="evidence" value="ECO:0000250"/>
    <property type="project" value="UniProtKB"/>
</dbReference>
<dbReference type="GO" id="GO:0031902">
    <property type="term" value="C:late endosome membrane"/>
    <property type="evidence" value="ECO:0000318"/>
    <property type="project" value="GO_Central"/>
</dbReference>
<dbReference type="GO" id="GO:0005765">
    <property type="term" value="C:lysosomal membrane"/>
    <property type="evidence" value="ECO:0000318"/>
    <property type="project" value="GO_Central"/>
</dbReference>
<dbReference type="GO" id="GO:0005886">
    <property type="term" value="C:plasma membrane"/>
    <property type="evidence" value="ECO:0000250"/>
    <property type="project" value="UniProtKB"/>
</dbReference>
<dbReference type="GO" id="GO:0055038">
    <property type="term" value="C:recycling endosome membrane"/>
    <property type="evidence" value="ECO:0000250"/>
    <property type="project" value="UniProtKB"/>
</dbReference>
<dbReference type="GO" id="GO:0030672">
    <property type="term" value="C:synaptic vesicle membrane"/>
    <property type="evidence" value="ECO:0007669"/>
    <property type="project" value="UniProtKB-SubCell"/>
</dbReference>
<dbReference type="GO" id="GO:0072594">
    <property type="term" value="P:establishment of protein localization to organelle"/>
    <property type="evidence" value="ECO:0000318"/>
    <property type="project" value="GO_Central"/>
</dbReference>
<dbReference type="FunFam" id="2.40.160.110:FF:000002">
    <property type="entry name" value="lysosome-associated membrane glycoprotein 5 isoform X1"/>
    <property type="match status" value="1"/>
</dbReference>
<dbReference type="Gene3D" id="2.40.160.110">
    <property type="match status" value="1"/>
</dbReference>
<dbReference type="InterPro" id="IPR048528">
    <property type="entry name" value="Lamp2-like_luminal"/>
</dbReference>
<dbReference type="InterPro" id="IPR018134">
    <property type="entry name" value="LAMP_CS"/>
</dbReference>
<dbReference type="InterPro" id="IPR002000">
    <property type="entry name" value="Lysosome-assoc_membr_glycop"/>
</dbReference>
<dbReference type="PANTHER" id="PTHR11506">
    <property type="entry name" value="LYSOSOME-ASSOCIATED MEMBRANE GLYCOPROTEIN"/>
    <property type="match status" value="1"/>
</dbReference>
<dbReference type="PANTHER" id="PTHR11506:SF35">
    <property type="entry name" value="LYSOSOME-ASSOCIATED MEMBRANE GLYCOPROTEIN 5"/>
    <property type="match status" value="1"/>
</dbReference>
<dbReference type="Pfam" id="PF01299">
    <property type="entry name" value="Lamp2-like_luminal"/>
    <property type="match status" value="1"/>
</dbReference>
<dbReference type="PROSITE" id="PS00310">
    <property type="entry name" value="LAMP_1"/>
    <property type="match status" value="1"/>
</dbReference>
<evidence type="ECO:0000250" key="1">
    <source>
        <dbReference type="UniProtKB" id="Q9D387"/>
    </source>
</evidence>
<evidence type="ECO:0000250" key="2">
    <source>
        <dbReference type="UniProtKB" id="Q9UJQ1"/>
    </source>
</evidence>
<evidence type="ECO:0000255" key="3"/>
<evidence type="ECO:0000305" key="4"/>
<gene>
    <name type="primary">lamp5</name>
    <name type="ORF">zgc:165600</name>
</gene>
<proteinExistence type="evidence at transcript level"/>
<accession>A8WFR0</accession>
<sequence length="275" mass="30686">MEFQLLLLCSVWALGVCAEQEVENLSGLSTNPERDIFVVRENGTTCLMAEFAVRFLIPYDVLALNGIDLITEQTSVAIPRGAQIAGKCGPSESELQISWAAQAFNFHIYFSKEKRVQGSDGKAPEAEVWKINRVQLVYDTSENTHFINAYNPGKHTASTHRLSALVTPAGRSYVCAAQQTLTLISSDHQKGVTVSIYDIQIQPFDINADFVFSEPYKCVTDQREQLEQTLPLVLGLILGLIIVITISVYHFHLKLNAAHTQQPTLPRDRSLYKNM</sequence>